<comment type="function">
    <text evidence="3">Secreted alpha-galactosidase required for catabolic conversion of melibiose to glucose and galactose.</text>
</comment>
<comment type="catalytic activity">
    <reaction>
        <text>Hydrolysis of terminal, non-reducing alpha-D-galactose residues in alpha-D-galactosides, including galactose oligosaccharides, galactomannans and galactolipids.</text>
        <dbReference type="EC" id="3.2.1.22"/>
    </reaction>
</comment>
<comment type="subcellular location">
    <subcellularLocation>
        <location evidence="4">Endoplasmic reticulum lumen</location>
    </subcellularLocation>
    <subcellularLocation>
        <location evidence="3">Secreted</location>
    </subcellularLocation>
</comment>
<comment type="similarity">
    <text evidence="5">Belongs to the glycosyl hydrolase 27 family.</text>
</comment>
<accession>Q9URZ0</accession>
<sequence length="436" mass="49366">MISISFLNCFFLVFLFLFFSDVHGSYNGLGLKPQMGWNSWNKYACDIDESIILNNAKAIKEEGLLDLGYEYIVMDDCWSKHERNATTGRLEANPDKFPNGIGSMAKKLHDMGFKFGMYSSAGKYTCAGFPGSLNHEQIDADTFADWGVDYLKYDNCFNEGKSGVPLISYERYKRMSDALNKTGRPIFYSLCQWGEDFVWNWGNTIANSWRISGDIFDTFSRKDVRCPCETIECFALQGDHCSVMNIISKASFLSSKAGMNSGWNDLDSLEVGNGGMSFEEYKTHFTMWAILKSPLILGNDVSSMSPMDKLIVSNKELISINQDIGTNPAALIWKKKYGDEYIELFSGRLSNNDWVVAVLNAASEPLKMGIHLSDIFVDALGNAEHDWLATDLWNNNVKLVSDRIRANVASHGVQVWRFQQYKVKNTNDKFFSFNKH</sequence>
<keyword id="KW-1015">Disulfide bond</keyword>
<keyword id="KW-0256">Endoplasmic reticulum</keyword>
<keyword id="KW-0325">Glycoprotein</keyword>
<keyword id="KW-0326">Glycosidase</keyword>
<keyword id="KW-0378">Hydrolase</keyword>
<keyword id="KW-1185">Reference proteome</keyword>
<keyword id="KW-0964">Secreted</keyword>
<keyword id="KW-0732">Signal</keyword>
<proteinExistence type="inferred from homology"/>
<gene>
    <name type="primary">mel1</name>
    <name type="ORF">SPAC869.07c</name>
</gene>
<feature type="signal peptide" evidence="2">
    <location>
        <begin position="1"/>
        <end position="24"/>
    </location>
</feature>
<feature type="chain" id="PRO_0000001006" description="Alpha-galactosidase mel1">
    <location>
        <begin position="25"/>
        <end position="436"/>
    </location>
</feature>
<feature type="active site" description="Nucleophile" evidence="1">
    <location>
        <position position="154"/>
    </location>
</feature>
<feature type="active site" description="Proton donor" evidence="1">
    <location>
        <position position="214"/>
    </location>
</feature>
<feature type="glycosylation site" description="N-linked (GlcNAc...) asparagine" evidence="2">
    <location>
        <position position="84"/>
    </location>
</feature>
<feature type="glycosylation site" description="N-linked (GlcNAc...) asparagine" evidence="2">
    <location>
        <position position="180"/>
    </location>
</feature>
<feature type="disulfide bond" evidence="1">
    <location>
        <begin position="45"/>
        <end position="77"/>
    </location>
</feature>
<feature type="disulfide bond" evidence="1">
    <location>
        <begin position="126"/>
        <end position="156"/>
    </location>
</feature>
<reference key="1">
    <citation type="journal article" date="2002" name="Nature">
        <title>The genome sequence of Schizosaccharomyces pombe.</title>
        <authorList>
            <person name="Wood V."/>
            <person name="Gwilliam R."/>
            <person name="Rajandream M.A."/>
            <person name="Lyne M.H."/>
            <person name="Lyne R."/>
            <person name="Stewart A."/>
            <person name="Sgouros J.G."/>
            <person name="Peat N."/>
            <person name="Hayles J."/>
            <person name="Baker S.G."/>
            <person name="Basham D."/>
            <person name="Bowman S."/>
            <person name="Brooks K."/>
            <person name="Brown D."/>
            <person name="Brown S."/>
            <person name="Chillingworth T."/>
            <person name="Churcher C.M."/>
            <person name="Collins M."/>
            <person name="Connor R."/>
            <person name="Cronin A."/>
            <person name="Davis P."/>
            <person name="Feltwell T."/>
            <person name="Fraser A."/>
            <person name="Gentles S."/>
            <person name="Goble A."/>
            <person name="Hamlin N."/>
            <person name="Harris D.E."/>
            <person name="Hidalgo J."/>
            <person name="Hodgson G."/>
            <person name="Holroyd S."/>
            <person name="Hornsby T."/>
            <person name="Howarth S."/>
            <person name="Huckle E.J."/>
            <person name="Hunt S."/>
            <person name="Jagels K."/>
            <person name="James K.D."/>
            <person name="Jones L."/>
            <person name="Jones M."/>
            <person name="Leather S."/>
            <person name="McDonald S."/>
            <person name="McLean J."/>
            <person name="Mooney P."/>
            <person name="Moule S."/>
            <person name="Mungall K.L."/>
            <person name="Murphy L.D."/>
            <person name="Niblett D."/>
            <person name="Odell C."/>
            <person name="Oliver K."/>
            <person name="O'Neil S."/>
            <person name="Pearson D."/>
            <person name="Quail M.A."/>
            <person name="Rabbinowitsch E."/>
            <person name="Rutherford K.M."/>
            <person name="Rutter S."/>
            <person name="Saunders D."/>
            <person name="Seeger K."/>
            <person name="Sharp S."/>
            <person name="Skelton J."/>
            <person name="Simmonds M.N."/>
            <person name="Squares R."/>
            <person name="Squares S."/>
            <person name="Stevens K."/>
            <person name="Taylor K."/>
            <person name="Taylor R.G."/>
            <person name="Tivey A."/>
            <person name="Walsh S.V."/>
            <person name="Warren T."/>
            <person name="Whitehead S."/>
            <person name="Woodward J.R."/>
            <person name="Volckaert G."/>
            <person name="Aert R."/>
            <person name="Robben J."/>
            <person name="Grymonprez B."/>
            <person name="Weltjens I."/>
            <person name="Vanstreels E."/>
            <person name="Rieger M."/>
            <person name="Schaefer M."/>
            <person name="Mueller-Auer S."/>
            <person name="Gabel C."/>
            <person name="Fuchs M."/>
            <person name="Duesterhoeft A."/>
            <person name="Fritzc C."/>
            <person name="Holzer E."/>
            <person name="Moestl D."/>
            <person name="Hilbert H."/>
            <person name="Borzym K."/>
            <person name="Langer I."/>
            <person name="Beck A."/>
            <person name="Lehrach H."/>
            <person name="Reinhardt R."/>
            <person name="Pohl T.M."/>
            <person name="Eger P."/>
            <person name="Zimmermann W."/>
            <person name="Wedler H."/>
            <person name="Wambutt R."/>
            <person name="Purnelle B."/>
            <person name="Goffeau A."/>
            <person name="Cadieu E."/>
            <person name="Dreano S."/>
            <person name="Gloux S."/>
            <person name="Lelaure V."/>
            <person name="Mottier S."/>
            <person name="Galibert F."/>
            <person name="Aves S.J."/>
            <person name="Xiang Z."/>
            <person name="Hunt C."/>
            <person name="Moore K."/>
            <person name="Hurst S.M."/>
            <person name="Lucas M."/>
            <person name="Rochet M."/>
            <person name="Gaillardin C."/>
            <person name="Tallada V.A."/>
            <person name="Garzon A."/>
            <person name="Thode G."/>
            <person name="Daga R.R."/>
            <person name="Cruzado L."/>
            <person name="Jimenez J."/>
            <person name="Sanchez M."/>
            <person name="del Rey F."/>
            <person name="Benito J."/>
            <person name="Dominguez A."/>
            <person name="Revuelta J.L."/>
            <person name="Moreno S."/>
            <person name="Armstrong J."/>
            <person name="Forsburg S.L."/>
            <person name="Cerutti L."/>
            <person name="Lowe T."/>
            <person name="McCombie W.R."/>
            <person name="Paulsen I."/>
            <person name="Potashkin J."/>
            <person name="Shpakovski G.V."/>
            <person name="Ussery D."/>
            <person name="Barrell B.G."/>
            <person name="Nurse P."/>
        </authorList>
    </citation>
    <scope>NUCLEOTIDE SEQUENCE [LARGE SCALE GENOMIC DNA]</scope>
    <source>
        <strain>972 / ATCC 24843</strain>
    </source>
</reference>
<reference key="2">
    <citation type="journal article" date="2005" name="Yeast">
        <title>Development of a semi-quantitative plate-based alpha-galactosidase gene reporter for Schizosaccharomyces pombe and its use to isolate a constitutively active Mam2.</title>
        <authorList>
            <person name="Goddard A."/>
            <person name="Ladds G."/>
            <person name="Davey J."/>
        </authorList>
    </citation>
    <scope>FUNCTION</scope>
    <scope>SUBCELLULAR LOCATION</scope>
</reference>
<reference key="3">
    <citation type="journal article" date="2006" name="Nat. Biotechnol.">
        <title>ORFeome cloning and global analysis of protein localization in the fission yeast Schizosaccharomyces pombe.</title>
        <authorList>
            <person name="Matsuyama A."/>
            <person name="Arai R."/>
            <person name="Yashiroda Y."/>
            <person name="Shirai A."/>
            <person name="Kamata A."/>
            <person name="Sekido S."/>
            <person name="Kobayashi Y."/>
            <person name="Hashimoto A."/>
            <person name="Hamamoto M."/>
            <person name="Hiraoka Y."/>
            <person name="Horinouchi S."/>
            <person name="Yoshida M."/>
        </authorList>
    </citation>
    <scope>SUBCELLULAR LOCATION [LARGE SCALE ANALYSIS]</scope>
</reference>
<dbReference type="EC" id="3.2.1.22"/>
<dbReference type="EMBL" id="CU329670">
    <property type="protein sequence ID" value="CAB60017.1"/>
    <property type="molecule type" value="Genomic_DNA"/>
</dbReference>
<dbReference type="PIR" id="T39118">
    <property type="entry name" value="T39118"/>
</dbReference>
<dbReference type="RefSeq" id="NP_595012.1">
    <property type="nucleotide sequence ID" value="NM_001020443.2"/>
</dbReference>
<dbReference type="SMR" id="Q9URZ0"/>
<dbReference type="BioGRID" id="279671">
    <property type="interactions" value="1"/>
</dbReference>
<dbReference type="FunCoup" id="Q9URZ0">
    <property type="interactions" value="174"/>
</dbReference>
<dbReference type="STRING" id="284812.Q9URZ0"/>
<dbReference type="CAZy" id="GH27">
    <property type="family name" value="Glycoside Hydrolase Family 27"/>
</dbReference>
<dbReference type="GlyCosmos" id="Q9URZ0">
    <property type="glycosylation" value="2 sites, No reported glycans"/>
</dbReference>
<dbReference type="PaxDb" id="4896-SPAC869.07c.1"/>
<dbReference type="EnsemblFungi" id="SPAC869.07c.1">
    <property type="protein sequence ID" value="SPAC869.07c.1:pep"/>
    <property type="gene ID" value="SPAC869.07c"/>
</dbReference>
<dbReference type="GeneID" id="2543243"/>
<dbReference type="KEGG" id="spo:2543243"/>
<dbReference type="PomBase" id="SPAC869.07c">
    <property type="gene designation" value="mel1"/>
</dbReference>
<dbReference type="VEuPathDB" id="FungiDB:SPAC869.07c"/>
<dbReference type="eggNOG" id="KOG2366">
    <property type="taxonomic scope" value="Eukaryota"/>
</dbReference>
<dbReference type="HOGENOM" id="CLU_013093_1_0_1"/>
<dbReference type="InParanoid" id="Q9URZ0"/>
<dbReference type="OMA" id="DRYPPMR"/>
<dbReference type="PhylomeDB" id="Q9URZ0"/>
<dbReference type="Reactome" id="R-SPO-6798695">
    <property type="pathway name" value="Neutrophil degranulation"/>
</dbReference>
<dbReference type="PRO" id="PR:Q9URZ0"/>
<dbReference type="Proteomes" id="UP000002485">
    <property type="component" value="Chromosome I"/>
</dbReference>
<dbReference type="GO" id="GO:0005788">
    <property type="term" value="C:endoplasmic reticulum lumen"/>
    <property type="evidence" value="ECO:0007669"/>
    <property type="project" value="UniProtKB-SubCell"/>
</dbReference>
<dbReference type="GO" id="GO:0005576">
    <property type="term" value="C:extracellular region"/>
    <property type="evidence" value="ECO:0000314"/>
    <property type="project" value="PomBase"/>
</dbReference>
<dbReference type="GO" id="GO:0004557">
    <property type="term" value="F:alpha-galactosidase activity"/>
    <property type="evidence" value="ECO:0000314"/>
    <property type="project" value="PomBase"/>
</dbReference>
<dbReference type="GO" id="GO:0005995">
    <property type="term" value="P:melibiose catabolic process"/>
    <property type="evidence" value="ECO:0000305"/>
    <property type="project" value="PomBase"/>
</dbReference>
<dbReference type="CDD" id="cd14792">
    <property type="entry name" value="GH27"/>
    <property type="match status" value="1"/>
</dbReference>
<dbReference type="FunFam" id="3.20.20.70:FF:000202">
    <property type="entry name" value="Alpha-galactosidase"/>
    <property type="match status" value="1"/>
</dbReference>
<dbReference type="Gene3D" id="3.20.20.70">
    <property type="entry name" value="Aldolase class I"/>
    <property type="match status" value="1"/>
</dbReference>
<dbReference type="Gene3D" id="2.60.40.1180">
    <property type="entry name" value="Golgi alpha-mannosidase II"/>
    <property type="match status" value="1"/>
</dbReference>
<dbReference type="InterPro" id="IPR013785">
    <property type="entry name" value="Aldolase_TIM"/>
</dbReference>
<dbReference type="InterPro" id="IPR002241">
    <property type="entry name" value="Glyco_hydro_27"/>
</dbReference>
<dbReference type="InterPro" id="IPR000111">
    <property type="entry name" value="Glyco_hydro_27/36_CS"/>
</dbReference>
<dbReference type="InterPro" id="IPR013780">
    <property type="entry name" value="Glyco_hydro_b"/>
</dbReference>
<dbReference type="InterPro" id="IPR006215">
    <property type="entry name" value="Glyco_hydro_melibiase"/>
</dbReference>
<dbReference type="InterPro" id="IPR017853">
    <property type="entry name" value="Glycoside_hydrolase_SF"/>
</dbReference>
<dbReference type="InterPro" id="IPR041233">
    <property type="entry name" value="Melibiase_C"/>
</dbReference>
<dbReference type="PANTHER" id="PTHR11452:SF75">
    <property type="entry name" value="ALPHA-GALACTOSIDASE MEL1"/>
    <property type="match status" value="1"/>
</dbReference>
<dbReference type="PANTHER" id="PTHR11452">
    <property type="entry name" value="ALPHA-GALACTOSIDASE/ALPHA-N-ACETYLGALACTOSAMINIDASE"/>
    <property type="match status" value="1"/>
</dbReference>
<dbReference type="Pfam" id="PF16499">
    <property type="entry name" value="Melibiase_2"/>
    <property type="match status" value="1"/>
</dbReference>
<dbReference type="Pfam" id="PF17801">
    <property type="entry name" value="Melibiase_C"/>
    <property type="match status" value="1"/>
</dbReference>
<dbReference type="PRINTS" id="PR00740">
    <property type="entry name" value="GLHYDRLASE27"/>
</dbReference>
<dbReference type="PRINTS" id="PR00748">
    <property type="entry name" value="MELIBIASE"/>
</dbReference>
<dbReference type="SUPFAM" id="SSF51445">
    <property type="entry name" value="(Trans)glycosidases"/>
    <property type="match status" value="1"/>
</dbReference>
<dbReference type="SUPFAM" id="SSF51011">
    <property type="entry name" value="Glycosyl hydrolase domain"/>
    <property type="match status" value="1"/>
</dbReference>
<dbReference type="PROSITE" id="PS00512">
    <property type="entry name" value="ALPHA_GALACTOSIDASE"/>
    <property type="match status" value="1"/>
</dbReference>
<name>AGAL_SCHPO</name>
<evidence type="ECO:0000250" key="1"/>
<evidence type="ECO:0000255" key="2"/>
<evidence type="ECO:0000269" key="3">
    <source>
    </source>
</evidence>
<evidence type="ECO:0000269" key="4">
    <source>
    </source>
</evidence>
<evidence type="ECO:0000305" key="5"/>
<protein>
    <recommendedName>
        <fullName>Alpha-galactosidase mel1</fullName>
        <ecNumber>3.2.1.22</ecNumber>
    </recommendedName>
    <alternativeName>
        <fullName>Alpha-D-galactoside galactohydrolase</fullName>
    </alternativeName>
    <alternativeName>
        <fullName>Melibiase</fullName>
    </alternativeName>
</protein>
<organism>
    <name type="scientific">Schizosaccharomyces pombe (strain 972 / ATCC 24843)</name>
    <name type="common">Fission yeast</name>
    <dbReference type="NCBI Taxonomy" id="284812"/>
    <lineage>
        <taxon>Eukaryota</taxon>
        <taxon>Fungi</taxon>
        <taxon>Dikarya</taxon>
        <taxon>Ascomycota</taxon>
        <taxon>Taphrinomycotina</taxon>
        <taxon>Schizosaccharomycetes</taxon>
        <taxon>Schizosaccharomycetales</taxon>
        <taxon>Schizosaccharomycetaceae</taxon>
        <taxon>Schizosaccharomyces</taxon>
    </lineage>
</organism>